<proteinExistence type="inferred from homology"/>
<feature type="signal peptide" evidence="1">
    <location>
        <begin position="1"/>
        <end position="47"/>
    </location>
</feature>
<feature type="chain" id="PRO_0000259074" description="Tol-Pal system protein TolB" evidence="1">
    <location>
        <begin position="48"/>
        <end position="450"/>
    </location>
</feature>
<dbReference type="EMBL" id="CP000090">
    <property type="protein sequence ID" value="AAZ60175.1"/>
    <property type="molecule type" value="Genomic_DNA"/>
</dbReference>
<dbReference type="SMR" id="Q474K8"/>
<dbReference type="STRING" id="264198.Reut_A0795"/>
<dbReference type="KEGG" id="reu:Reut_A0795"/>
<dbReference type="eggNOG" id="COG0823">
    <property type="taxonomic scope" value="Bacteria"/>
</dbReference>
<dbReference type="HOGENOM" id="CLU_047123_0_0_4"/>
<dbReference type="OrthoDB" id="9802240at2"/>
<dbReference type="GO" id="GO:0042597">
    <property type="term" value="C:periplasmic space"/>
    <property type="evidence" value="ECO:0007669"/>
    <property type="project" value="UniProtKB-SubCell"/>
</dbReference>
<dbReference type="GO" id="GO:0051301">
    <property type="term" value="P:cell division"/>
    <property type="evidence" value="ECO:0007669"/>
    <property type="project" value="UniProtKB-UniRule"/>
</dbReference>
<dbReference type="GO" id="GO:0017038">
    <property type="term" value="P:protein import"/>
    <property type="evidence" value="ECO:0007669"/>
    <property type="project" value="InterPro"/>
</dbReference>
<dbReference type="Gene3D" id="2.120.10.30">
    <property type="entry name" value="TolB, C-terminal domain"/>
    <property type="match status" value="1"/>
</dbReference>
<dbReference type="Gene3D" id="3.40.50.10070">
    <property type="entry name" value="TolB, N-terminal domain"/>
    <property type="match status" value="1"/>
</dbReference>
<dbReference type="HAMAP" id="MF_00671">
    <property type="entry name" value="TolB"/>
    <property type="match status" value="1"/>
</dbReference>
<dbReference type="InterPro" id="IPR011042">
    <property type="entry name" value="6-blade_b-propeller_TolB-like"/>
</dbReference>
<dbReference type="InterPro" id="IPR011659">
    <property type="entry name" value="PD40"/>
</dbReference>
<dbReference type="InterPro" id="IPR014167">
    <property type="entry name" value="Tol-Pal_TolB"/>
</dbReference>
<dbReference type="InterPro" id="IPR007195">
    <property type="entry name" value="TolB_N"/>
</dbReference>
<dbReference type="NCBIfam" id="TIGR02800">
    <property type="entry name" value="propeller_TolB"/>
    <property type="match status" value="1"/>
</dbReference>
<dbReference type="PANTHER" id="PTHR36842:SF1">
    <property type="entry name" value="PROTEIN TOLB"/>
    <property type="match status" value="1"/>
</dbReference>
<dbReference type="PANTHER" id="PTHR36842">
    <property type="entry name" value="PROTEIN TOLB HOMOLOG"/>
    <property type="match status" value="1"/>
</dbReference>
<dbReference type="Pfam" id="PF07676">
    <property type="entry name" value="PD40"/>
    <property type="match status" value="5"/>
</dbReference>
<dbReference type="Pfam" id="PF04052">
    <property type="entry name" value="TolB_N"/>
    <property type="match status" value="1"/>
</dbReference>
<dbReference type="SUPFAM" id="SSF52964">
    <property type="entry name" value="TolB, N-terminal domain"/>
    <property type="match status" value="1"/>
</dbReference>
<dbReference type="SUPFAM" id="SSF69304">
    <property type="entry name" value="Tricorn protease N-terminal domain"/>
    <property type="match status" value="1"/>
</dbReference>
<sequence length="450" mass="48142">MRKLWAPNWLSAKRHHANQAATRLIGRHALMAWLAAALALSAGAAQAQLNVEISGVGASQIPVATANFQGEAQAPQNLTAIIRSDLARSGRLRNVDPGGATVAESANVDLGSWKSRGADAFVAGSVTPSGNGQYEVRFRLYDTVKGQSLGGLAFNVNQGQLRVTAHKIADYIYEKLLGERGVFATRLSYVSRVGGRYQLLISDSDGQNSQVALTSNEPIISPSWSPDGRRVAYVSFEAKKPVVYVHDLATGKRTLVSNQKGNNSAPSWSPDGQHLAVALSRDGNTQVYQVNADGSGIRRLTRSSAIDTEPQYSPDGKSIYFTSDRGGAPQVYRMPAGGEEAGSAQRVTFKGSYNVSPRISPDGKYLAYITRSGGFKLQLQDLTNGDVTSLTDTSNDEAPSFAANGKYILYATRVGGRSVLAAVSTDGRTRQVLSLQSGDVREPSWGPFMQ</sequence>
<name>TOLB_CUPPJ</name>
<organism>
    <name type="scientific">Cupriavidus pinatubonensis (strain JMP 134 / LMG 1197)</name>
    <name type="common">Cupriavidus necator (strain JMP 134)</name>
    <dbReference type="NCBI Taxonomy" id="264198"/>
    <lineage>
        <taxon>Bacteria</taxon>
        <taxon>Pseudomonadati</taxon>
        <taxon>Pseudomonadota</taxon>
        <taxon>Betaproteobacteria</taxon>
        <taxon>Burkholderiales</taxon>
        <taxon>Burkholderiaceae</taxon>
        <taxon>Cupriavidus</taxon>
    </lineage>
</organism>
<evidence type="ECO:0000255" key="1">
    <source>
        <dbReference type="HAMAP-Rule" id="MF_00671"/>
    </source>
</evidence>
<protein>
    <recommendedName>
        <fullName evidence="1">Tol-Pal system protein TolB</fullName>
    </recommendedName>
</protein>
<accession>Q474K8</accession>
<comment type="function">
    <text evidence="1">Part of the Tol-Pal system, which plays a role in outer membrane invagination during cell division and is important for maintaining outer membrane integrity.</text>
</comment>
<comment type="subunit">
    <text evidence="1">The Tol-Pal system is composed of five core proteins: the inner membrane proteins TolA, TolQ and TolR, the periplasmic protein TolB and the outer membrane protein Pal. They form a network linking the inner and outer membranes and the peptidoglycan layer.</text>
</comment>
<comment type="subcellular location">
    <subcellularLocation>
        <location evidence="1">Periplasm</location>
    </subcellularLocation>
</comment>
<comment type="similarity">
    <text evidence="1">Belongs to the TolB family.</text>
</comment>
<gene>
    <name evidence="1" type="primary">tolB</name>
    <name type="ordered locus">Reut_A0795</name>
</gene>
<reference key="1">
    <citation type="journal article" date="2010" name="PLoS ONE">
        <title>The complete multipartite genome sequence of Cupriavidus necator JMP134, a versatile pollutant degrader.</title>
        <authorList>
            <person name="Lykidis A."/>
            <person name="Perez-Pantoja D."/>
            <person name="Ledger T."/>
            <person name="Mavromatis K."/>
            <person name="Anderson I.J."/>
            <person name="Ivanova N.N."/>
            <person name="Hooper S.D."/>
            <person name="Lapidus A."/>
            <person name="Lucas S."/>
            <person name="Gonzalez B."/>
            <person name="Kyrpides N.C."/>
        </authorList>
    </citation>
    <scope>NUCLEOTIDE SEQUENCE [LARGE SCALE GENOMIC DNA]</scope>
    <source>
        <strain>JMP134 / LMG 1197</strain>
    </source>
</reference>
<keyword id="KW-0131">Cell cycle</keyword>
<keyword id="KW-0132">Cell division</keyword>
<keyword id="KW-0574">Periplasm</keyword>
<keyword id="KW-0732">Signal</keyword>